<keyword id="KW-0963">Cytoplasm</keyword>
<keyword id="KW-0350">Heme biosynthesis</keyword>
<keyword id="KW-0479">Metal-binding</keyword>
<keyword id="KW-0560">Oxidoreductase</keyword>
<keyword id="KW-0627">Porphyrin biosynthesis</keyword>
<dbReference type="EC" id="1.3.3.3" evidence="1"/>
<dbReference type="EMBL" id="CP000847">
    <property type="protein sequence ID" value="ABV75592.1"/>
    <property type="molecule type" value="Genomic_DNA"/>
</dbReference>
<dbReference type="RefSeq" id="WP_012150220.1">
    <property type="nucleotide sequence ID" value="NC_009881.1"/>
</dbReference>
<dbReference type="SMR" id="A8GQB7"/>
<dbReference type="STRING" id="293614.A1C_06860"/>
<dbReference type="KEGG" id="rak:A1C_06860"/>
<dbReference type="eggNOG" id="COG0408">
    <property type="taxonomic scope" value="Bacteria"/>
</dbReference>
<dbReference type="HOGENOM" id="CLU_026169_0_1_5"/>
<dbReference type="UniPathway" id="UPA00251">
    <property type="reaction ID" value="UER00322"/>
</dbReference>
<dbReference type="Proteomes" id="UP000006830">
    <property type="component" value="Chromosome"/>
</dbReference>
<dbReference type="GO" id="GO:0005737">
    <property type="term" value="C:cytoplasm"/>
    <property type="evidence" value="ECO:0007669"/>
    <property type="project" value="UniProtKB-SubCell"/>
</dbReference>
<dbReference type="GO" id="GO:0004109">
    <property type="term" value="F:coproporphyrinogen oxidase activity"/>
    <property type="evidence" value="ECO:0007669"/>
    <property type="project" value="UniProtKB-UniRule"/>
</dbReference>
<dbReference type="GO" id="GO:0046872">
    <property type="term" value="F:metal ion binding"/>
    <property type="evidence" value="ECO:0007669"/>
    <property type="project" value="UniProtKB-KW"/>
</dbReference>
<dbReference type="GO" id="GO:0042803">
    <property type="term" value="F:protein homodimerization activity"/>
    <property type="evidence" value="ECO:0000250"/>
    <property type="project" value="UniProtKB"/>
</dbReference>
<dbReference type="GO" id="GO:0006782">
    <property type="term" value="P:protoporphyrinogen IX biosynthetic process"/>
    <property type="evidence" value="ECO:0007669"/>
    <property type="project" value="UniProtKB-UniRule"/>
</dbReference>
<dbReference type="FunFam" id="3.40.1500.10:FF:000005">
    <property type="entry name" value="Oxygen-dependent coproporphyrinogen-III oxidase"/>
    <property type="match status" value="1"/>
</dbReference>
<dbReference type="Gene3D" id="3.40.1500.10">
    <property type="entry name" value="Coproporphyrinogen III oxidase, aerobic"/>
    <property type="match status" value="1"/>
</dbReference>
<dbReference type="HAMAP" id="MF_00333">
    <property type="entry name" value="Coprogen_oxidas"/>
    <property type="match status" value="1"/>
</dbReference>
<dbReference type="InterPro" id="IPR001260">
    <property type="entry name" value="Coprogen_oxidase_aer"/>
</dbReference>
<dbReference type="InterPro" id="IPR036406">
    <property type="entry name" value="Coprogen_oxidase_aer_sf"/>
</dbReference>
<dbReference type="InterPro" id="IPR018375">
    <property type="entry name" value="Coprogen_oxidase_CS"/>
</dbReference>
<dbReference type="NCBIfam" id="NF003727">
    <property type="entry name" value="PRK05330.1"/>
    <property type="match status" value="1"/>
</dbReference>
<dbReference type="PANTHER" id="PTHR10755">
    <property type="entry name" value="COPROPORPHYRINOGEN III OXIDASE, MITOCHONDRIAL"/>
    <property type="match status" value="1"/>
</dbReference>
<dbReference type="PANTHER" id="PTHR10755:SF0">
    <property type="entry name" value="OXYGEN-DEPENDENT COPROPORPHYRINOGEN-III OXIDASE, MITOCHONDRIAL"/>
    <property type="match status" value="1"/>
</dbReference>
<dbReference type="Pfam" id="PF01218">
    <property type="entry name" value="Coprogen_oxidas"/>
    <property type="match status" value="1"/>
</dbReference>
<dbReference type="PIRSF" id="PIRSF000166">
    <property type="entry name" value="Coproporphyri_ox"/>
    <property type="match status" value="1"/>
</dbReference>
<dbReference type="PRINTS" id="PR00073">
    <property type="entry name" value="COPRGNOXDASE"/>
</dbReference>
<dbReference type="SUPFAM" id="SSF102886">
    <property type="entry name" value="Coproporphyrinogen III oxidase"/>
    <property type="match status" value="1"/>
</dbReference>
<dbReference type="PROSITE" id="PS01021">
    <property type="entry name" value="COPROGEN_OXIDASE"/>
    <property type="match status" value="1"/>
</dbReference>
<evidence type="ECO:0000255" key="1">
    <source>
        <dbReference type="HAMAP-Rule" id="MF_00333"/>
    </source>
</evidence>
<accession>A8GQB7</accession>
<proteinExistence type="inferred from homology"/>
<reference key="1">
    <citation type="submission" date="2007-09" db="EMBL/GenBank/DDBJ databases">
        <title>Complete genome sequence of Rickettsia akari.</title>
        <authorList>
            <person name="Madan A."/>
            <person name="Fahey J."/>
            <person name="Helton E."/>
            <person name="Ketteman M."/>
            <person name="Madan A."/>
            <person name="Rodrigues S."/>
            <person name="Sanchez A."/>
            <person name="Whiting M."/>
            <person name="Dasch G."/>
            <person name="Eremeeva M."/>
        </authorList>
    </citation>
    <scope>NUCLEOTIDE SEQUENCE [LARGE SCALE GENOMIC DNA]</scope>
    <source>
        <strain>Hartford</strain>
    </source>
</reference>
<gene>
    <name evidence="1" type="primary">hemF</name>
    <name type="ordered locus">A1C_06860</name>
</gene>
<sequence>MKIENKEITSNWFTNLRDLLCKEFEKIEEEYAQTKCLKPAKFVRTSWQRNGGGGGIMSLMKGEVFEKVGVNISTVFGEFSPEFRSEIPGAELDGKFSATGISLVAHLKSPLIPAMHFNTRYIETSKSWFGGGGDLTPFYPEENETEKFHAAFKEACDKYDSGYYPKFKKQCDEYFYLKHRKEPRGVGGIFYDYLNSGNFEQDFSFTQDVGMALLSVYPEIVRSKLFLPWTAEQKEYQLIRRGRYVEFNLLYDRGTKFGLMTDGNVEAILMSLPPEVKFN</sequence>
<feature type="chain" id="PRO_1000019492" description="Oxygen-dependent coproporphyrinogen-III oxidase">
    <location>
        <begin position="1"/>
        <end position="279"/>
    </location>
</feature>
<feature type="region of interest" description="Important for dimerization" evidence="1">
    <location>
        <begin position="244"/>
        <end position="279"/>
    </location>
</feature>
<feature type="active site" description="Proton donor" evidence="1">
    <location>
        <position position="116"/>
    </location>
</feature>
<feature type="binding site" evidence="1">
    <location>
        <position position="102"/>
    </location>
    <ligand>
        <name>substrate</name>
    </ligand>
</feature>
<feature type="binding site" evidence="1">
    <location>
        <position position="106"/>
    </location>
    <ligand>
        <name>a divalent metal cation</name>
        <dbReference type="ChEBI" id="CHEBI:60240"/>
    </ligand>
</feature>
<feature type="binding site" evidence="1">
    <location>
        <position position="116"/>
    </location>
    <ligand>
        <name>a divalent metal cation</name>
        <dbReference type="ChEBI" id="CHEBI:60240"/>
    </ligand>
</feature>
<feature type="binding site" evidence="1">
    <location>
        <begin position="118"/>
        <end position="120"/>
    </location>
    <ligand>
        <name>substrate</name>
    </ligand>
</feature>
<feature type="binding site" evidence="1">
    <location>
        <position position="149"/>
    </location>
    <ligand>
        <name>a divalent metal cation</name>
        <dbReference type="ChEBI" id="CHEBI:60240"/>
    </ligand>
</feature>
<feature type="binding site" evidence="1">
    <location>
        <position position="179"/>
    </location>
    <ligand>
        <name>a divalent metal cation</name>
        <dbReference type="ChEBI" id="CHEBI:60240"/>
    </ligand>
</feature>
<feature type="site" description="Important for dimerization" evidence="1">
    <location>
        <position position="179"/>
    </location>
</feature>
<comment type="function">
    <text evidence="1">Involved in the heme biosynthesis. Catalyzes the aerobic oxidative decarboxylation of propionate groups of rings A and B of coproporphyrinogen-III to yield the vinyl groups in protoporphyrinogen-IX.</text>
</comment>
<comment type="catalytic activity">
    <reaction evidence="1">
        <text>coproporphyrinogen III + O2 + 2 H(+) = protoporphyrinogen IX + 2 CO2 + 2 H2O</text>
        <dbReference type="Rhea" id="RHEA:18257"/>
        <dbReference type="ChEBI" id="CHEBI:15377"/>
        <dbReference type="ChEBI" id="CHEBI:15378"/>
        <dbReference type="ChEBI" id="CHEBI:15379"/>
        <dbReference type="ChEBI" id="CHEBI:16526"/>
        <dbReference type="ChEBI" id="CHEBI:57307"/>
        <dbReference type="ChEBI" id="CHEBI:57309"/>
        <dbReference type="EC" id="1.3.3.3"/>
    </reaction>
</comment>
<comment type="cofactor">
    <cofactor evidence="1">
        <name>a divalent metal cation</name>
        <dbReference type="ChEBI" id="CHEBI:60240"/>
    </cofactor>
</comment>
<comment type="pathway">
    <text evidence="1">Porphyrin-containing compound metabolism; protoporphyrin-IX biosynthesis; protoporphyrinogen-IX from coproporphyrinogen-III (O2 route): step 1/1.</text>
</comment>
<comment type="subunit">
    <text evidence="1">Homodimer.</text>
</comment>
<comment type="subcellular location">
    <subcellularLocation>
        <location evidence="1">Cytoplasm</location>
    </subcellularLocation>
</comment>
<comment type="similarity">
    <text evidence="1">Belongs to the aerobic coproporphyrinogen-III oxidase family.</text>
</comment>
<name>HEM6_RICAH</name>
<protein>
    <recommendedName>
        <fullName evidence="1">Oxygen-dependent coproporphyrinogen-III oxidase</fullName>
        <shortName evidence="1">CPO</shortName>
        <shortName evidence="1">Coprogen oxidase</shortName>
        <shortName evidence="1">Coproporphyrinogenase</shortName>
        <ecNumber evidence="1">1.3.3.3</ecNumber>
    </recommendedName>
</protein>
<organism>
    <name type="scientific">Rickettsia akari (strain Hartford)</name>
    <dbReference type="NCBI Taxonomy" id="293614"/>
    <lineage>
        <taxon>Bacteria</taxon>
        <taxon>Pseudomonadati</taxon>
        <taxon>Pseudomonadota</taxon>
        <taxon>Alphaproteobacteria</taxon>
        <taxon>Rickettsiales</taxon>
        <taxon>Rickettsiaceae</taxon>
        <taxon>Rickettsieae</taxon>
        <taxon>Rickettsia</taxon>
        <taxon>spotted fever group</taxon>
    </lineage>
</organism>